<name>LACC_STAA2</name>
<proteinExistence type="inferred from homology"/>
<evidence type="ECO:0000255" key="1">
    <source>
        <dbReference type="HAMAP-Rule" id="MF_01557"/>
    </source>
</evidence>
<comment type="catalytic activity">
    <reaction evidence="1">
        <text>D-tagatofuranose 6-phosphate + ATP = D-tagatofuranose 1,6-bisphosphate + ADP + H(+)</text>
        <dbReference type="Rhea" id="RHEA:12420"/>
        <dbReference type="ChEBI" id="CHEBI:15378"/>
        <dbReference type="ChEBI" id="CHEBI:30616"/>
        <dbReference type="ChEBI" id="CHEBI:58694"/>
        <dbReference type="ChEBI" id="CHEBI:58695"/>
        <dbReference type="ChEBI" id="CHEBI:456216"/>
        <dbReference type="EC" id="2.7.1.144"/>
    </reaction>
</comment>
<comment type="pathway">
    <text evidence="1">Carbohydrate metabolism; D-tagatose 6-phosphate degradation; D-glyceraldehyde 3-phosphate and glycerone phosphate from D-tagatose 6-phosphate: step 1/2.</text>
</comment>
<comment type="similarity">
    <text evidence="1">Belongs to the carbohydrate kinase PfkB family. LacC subfamily.</text>
</comment>
<sequence length="310" mass="33895">MILTLTLNPSVDISYPLTALKLDDVNRVQEVSKTAGGKGLNVTRVLAQVGEPVLASGFIGGELGQFIAKKLDHADIKHAFYNIKGETRNCIAILHEGQQTEILEQGPEIDNQEAAGFIKHFEQLLEKVEAVAISGSLPKGLNQDYYAQIIERCQNKGVPVILDCSGATLQTVLENPYKPTVIKPNISELYQLLNQPLDESLESLKQAVSQPLFEGIEWIIVSLGAQGAFAKHNHTFYRVNIPTINVLNPVGSGDSTVAGITSAILNHENDHDLLKKANTLGMLNAQEAQTGYVNLNNYDELFNQIEVLEV</sequence>
<gene>
    <name evidence="1" type="primary">lacC</name>
    <name type="ordered locus">SaurJH1_2263</name>
</gene>
<dbReference type="EC" id="2.7.1.144" evidence="1"/>
<dbReference type="EMBL" id="CP000736">
    <property type="protein sequence ID" value="ABR53091.1"/>
    <property type="molecule type" value="Genomic_DNA"/>
</dbReference>
<dbReference type="SMR" id="A6U3S3"/>
<dbReference type="KEGG" id="sah:SaurJH1_2263"/>
<dbReference type="HOGENOM" id="CLU_050013_5_0_9"/>
<dbReference type="UniPathway" id="UPA00704">
    <property type="reaction ID" value="UER00715"/>
</dbReference>
<dbReference type="GO" id="GO:0005829">
    <property type="term" value="C:cytosol"/>
    <property type="evidence" value="ECO:0007669"/>
    <property type="project" value="TreeGrafter"/>
</dbReference>
<dbReference type="GO" id="GO:0005524">
    <property type="term" value="F:ATP binding"/>
    <property type="evidence" value="ECO:0007669"/>
    <property type="project" value="UniProtKB-KW"/>
</dbReference>
<dbReference type="GO" id="GO:0008443">
    <property type="term" value="F:phosphofructokinase activity"/>
    <property type="evidence" value="ECO:0007669"/>
    <property type="project" value="TreeGrafter"/>
</dbReference>
<dbReference type="GO" id="GO:0009024">
    <property type="term" value="F:tagatose-6-phosphate kinase activity"/>
    <property type="evidence" value="ECO:0007669"/>
    <property type="project" value="UniProtKB-UniRule"/>
</dbReference>
<dbReference type="GO" id="GO:2001059">
    <property type="term" value="P:D-tagatose 6-phosphate catabolic process"/>
    <property type="evidence" value="ECO:0007669"/>
    <property type="project" value="UniProtKB-UniRule"/>
</dbReference>
<dbReference type="GO" id="GO:0019512">
    <property type="term" value="P:lactose catabolic process via tagatose-6-phosphate"/>
    <property type="evidence" value="ECO:0007669"/>
    <property type="project" value="InterPro"/>
</dbReference>
<dbReference type="CDD" id="cd01164">
    <property type="entry name" value="FruK_PfkB_like"/>
    <property type="match status" value="1"/>
</dbReference>
<dbReference type="FunFam" id="3.40.1190.20:FF:000001">
    <property type="entry name" value="Phosphofructokinase"/>
    <property type="match status" value="1"/>
</dbReference>
<dbReference type="Gene3D" id="3.40.1190.20">
    <property type="match status" value="1"/>
</dbReference>
<dbReference type="HAMAP" id="MF_01557">
    <property type="entry name" value="LacC"/>
    <property type="match status" value="1"/>
</dbReference>
<dbReference type="InterPro" id="IPR002173">
    <property type="entry name" value="Carboh/pur_kinase_PfkB_CS"/>
</dbReference>
<dbReference type="InterPro" id="IPR005926">
    <property type="entry name" value="LacC"/>
</dbReference>
<dbReference type="InterPro" id="IPR011611">
    <property type="entry name" value="PfkB_dom"/>
</dbReference>
<dbReference type="InterPro" id="IPR029056">
    <property type="entry name" value="Ribokinase-like"/>
</dbReference>
<dbReference type="InterPro" id="IPR017583">
    <property type="entry name" value="Tagatose/fructose_Pkinase"/>
</dbReference>
<dbReference type="NCBIfam" id="TIGR03168">
    <property type="entry name" value="1-PFK"/>
    <property type="match status" value="1"/>
</dbReference>
<dbReference type="NCBIfam" id="TIGR01231">
    <property type="entry name" value="lacC"/>
    <property type="match status" value="1"/>
</dbReference>
<dbReference type="NCBIfam" id="NF010033">
    <property type="entry name" value="PRK13508.1"/>
    <property type="match status" value="1"/>
</dbReference>
<dbReference type="PANTHER" id="PTHR46566:SF5">
    <property type="entry name" value="1-PHOSPHOFRUCTOKINASE"/>
    <property type="match status" value="1"/>
</dbReference>
<dbReference type="PANTHER" id="PTHR46566">
    <property type="entry name" value="1-PHOSPHOFRUCTOKINASE-RELATED"/>
    <property type="match status" value="1"/>
</dbReference>
<dbReference type="Pfam" id="PF00294">
    <property type="entry name" value="PfkB"/>
    <property type="match status" value="1"/>
</dbReference>
<dbReference type="PIRSF" id="PIRSF000535">
    <property type="entry name" value="1PFK/6PFK/LacC"/>
    <property type="match status" value="1"/>
</dbReference>
<dbReference type="SUPFAM" id="SSF53613">
    <property type="entry name" value="Ribokinase-like"/>
    <property type="match status" value="1"/>
</dbReference>
<dbReference type="PROSITE" id="PS00583">
    <property type="entry name" value="PFKB_KINASES_1"/>
    <property type="match status" value="1"/>
</dbReference>
<dbReference type="PROSITE" id="PS00584">
    <property type="entry name" value="PFKB_KINASES_2"/>
    <property type="match status" value="1"/>
</dbReference>
<organism>
    <name type="scientific">Staphylococcus aureus (strain JH1)</name>
    <dbReference type="NCBI Taxonomy" id="359787"/>
    <lineage>
        <taxon>Bacteria</taxon>
        <taxon>Bacillati</taxon>
        <taxon>Bacillota</taxon>
        <taxon>Bacilli</taxon>
        <taxon>Bacillales</taxon>
        <taxon>Staphylococcaceae</taxon>
        <taxon>Staphylococcus</taxon>
    </lineage>
</organism>
<accession>A6U3S3</accession>
<keyword id="KW-0067">ATP-binding</keyword>
<keyword id="KW-0418">Kinase</keyword>
<keyword id="KW-0423">Lactose metabolism</keyword>
<keyword id="KW-0547">Nucleotide-binding</keyword>
<keyword id="KW-0808">Transferase</keyword>
<protein>
    <recommendedName>
        <fullName evidence="1">Tagatose-6-phosphate kinase</fullName>
        <ecNumber evidence="1">2.7.1.144</ecNumber>
    </recommendedName>
    <alternativeName>
        <fullName evidence="1">Phosphotagatokinase</fullName>
    </alternativeName>
</protein>
<feature type="chain" id="PRO_1000087790" description="Tagatose-6-phosphate kinase">
    <location>
        <begin position="1"/>
        <end position="310"/>
    </location>
</feature>
<reference key="1">
    <citation type="submission" date="2007-06" db="EMBL/GenBank/DDBJ databases">
        <title>Complete sequence of chromosome of Staphylococcus aureus subsp. aureus JH1.</title>
        <authorList>
            <consortium name="US DOE Joint Genome Institute"/>
            <person name="Copeland A."/>
            <person name="Lucas S."/>
            <person name="Lapidus A."/>
            <person name="Barry K."/>
            <person name="Detter J.C."/>
            <person name="Glavina del Rio T."/>
            <person name="Hammon N."/>
            <person name="Israni S."/>
            <person name="Dalin E."/>
            <person name="Tice H."/>
            <person name="Pitluck S."/>
            <person name="Chain P."/>
            <person name="Malfatti S."/>
            <person name="Shin M."/>
            <person name="Vergez L."/>
            <person name="Schmutz J."/>
            <person name="Larimer F."/>
            <person name="Land M."/>
            <person name="Hauser L."/>
            <person name="Kyrpides N."/>
            <person name="Ivanova N."/>
            <person name="Tomasz A."/>
            <person name="Richardson P."/>
        </authorList>
    </citation>
    <scope>NUCLEOTIDE SEQUENCE [LARGE SCALE GENOMIC DNA]</scope>
    <source>
        <strain>JH1</strain>
    </source>
</reference>